<proteinExistence type="evidence at transcript level"/>
<sequence>MESRVLSSGATAISGVPRLTKPAGRITTTTVAVAFPARLNATGGNVVWGRQLRPSLLNLDHSSPVSLVTKPVKRDVLKPCSATASDSAGDAAPVGFLAKYPFLVTGFFFFMWYFLNVIFNILNKKIYNYFPYPYFVSVIHLAVGVVYCLGSWTVGLPKRAPVDSNILKLLIPVGFCHALGHVTSNVSFAAVAVSFTHTIKALEPFFNAAASQFVLGQSIPISLWLSLAPVVIGVSMASLTELSFNWLGFISAMISNISFTYRSIYSKKAMTDMDSTNLYAYISIIALLFCIPPAVLFEGPQLLKHGFNDAIAKVGMIKFISDLFWVGMFYHLYNQIATNTLERVAPLTHAVGNVLKRVFVIGFSIIVFGNKISTQTAIGTSIAIAGVAIYSLIKARIEEEKRRMKSA</sequence>
<protein>
    <recommendedName>
        <fullName>Triose phosphate/phosphate translocator, chloroplastic</fullName>
        <shortName>cTPT</shortName>
    </recommendedName>
</protein>
<evidence type="ECO:0000255" key="1"/>
<evidence type="ECO:0000305" key="2"/>
<feature type="transit peptide" description="Chloroplast" evidence="1">
    <location>
        <begin position="1"/>
        <end position="81"/>
    </location>
</feature>
<feature type="chain" id="PRO_0000035706" description="Triose phosphate/phosphate translocator, chloroplastic">
    <location>
        <begin position="82"/>
        <end position="407"/>
    </location>
</feature>
<feature type="topological domain" description="Chloroplast intermembrane" evidence="1">
    <location>
        <begin position="82"/>
        <end position="101"/>
    </location>
</feature>
<feature type="transmembrane region" description="Helical" evidence="1">
    <location>
        <begin position="102"/>
        <end position="122"/>
    </location>
</feature>
<feature type="topological domain" description="Lumenal" evidence="1">
    <location>
        <begin position="123"/>
        <end position="134"/>
    </location>
</feature>
<feature type="transmembrane region" description="Helical" evidence="1">
    <location>
        <begin position="135"/>
        <end position="155"/>
    </location>
</feature>
<feature type="topological domain" description="Chloroplast intermembrane" evidence="1">
    <location>
        <begin position="156"/>
        <end position="212"/>
    </location>
</feature>
<feature type="transmembrane region" description="Helical" evidence="1">
    <location>
        <begin position="213"/>
        <end position="233"/>
    </location>
</feature>
<feature type="topological domain" description="Lumenal" evidence="1">
    <location>
        <begin position="234"/>
        <end position="277"/>
    </location>
</feature>
<feature type="transmembrane region" description="Helical" evidence="1">
    <location>
        <begin position="278"/>
        <end position="297"/>
    </location>
</feature>
<feature type="topological domain" description="Chloroplast intermembrane" evidence="1">
    <location>
        <begin position="298"/>
        <end position="375"/>
    </location>
</feature>
<feature type="transmembrane region" description="Helical" evidence="1">
    <location>
        <begin position="376"/>
        <end position="396"/>
    </location>
</feature>
<feature type="topological domain" description="Lumenal" evidence="1">
    <location>
        <begin position="397"/>
        <end position="407"/>
    </location>
</feature>
<feature type="site" description="May be essential for binding and transport of phosphoenolpyruvate">
    <location>
        <position position="222"/>
    </location>
</feature>
<gene>
    <name type="primary">TPT</name>
</gene>
<keyword id="KW-0150">Chloroplast</keyword>
<keyword id="KW-0472">Membrane</keyword>
<keyword id="KW-0934">Plastid</keyword>
<keyword id="KW-0809">Transit peptide</keyword>
<keyword id="KW-0812">Transmembrane</keyword>
<keyword id="KW-1133">Transmembrane helix</keyword>
<keyword id="KW-0813">Transport</keyword>
<dbReference type="EMBL" id="Z26632">
    <property type="protein sequence ID" value="CAA81385.1"/>
    <property type="molecule type" value="mRNA"/>
</dbReference>
<dbReference type="PIR" id="S37550">
    <property type="entry name" value="S37550"/>
</dbReference>
<dbReference type="SMR" id="P49132"/>
<dbReference type="GO" id="GO:0031969">
    <property type="term" value="C:chloroplast membrane"/>
    <property type="evidence" value="ECO:0007669"/>
    <property type="project" value="UniProtKB-SubCell"/>
</dbReference>
<dbReference type="GO" id="GO:0015605">
    <property type="term" value="F:organophosphate ester transmembrane transporter activity"/>
    <property type="evidence" value="ECO:0007669"/>
    <property type="project" value="UniProtKB-ARBA"/>
</dbReference>
<dbReference type="GO" id="GO:0015120">
    <property type="term" value="F:phosphoglycerate transmembrane transporter activity"/>
    <property type="evidence" value="ECO:0007669"/>
    <property type="project" value="UniProtKB-ARBA"/>
</dbReference>
<dbReference type="InterPro" id="IPR004853">
    <property type="entry name" value="Sugar_P_trans_dom"/>
</dbReference>
<dbReference type="InterPro" id="IPR004696">
    <property type="entry name" value="Tpt_PEP_transl"/>
</dbReference>
<dbReference type="InterPro" id="IPR050186">
    <property type="entry name" value="TPT_transporter"/>
</dbReference>
<dbReference type="NCBIfam" id="TIGR00817">
    <property type="entry name" value="tpt"/>
    <property type="match status" value="1"/>
</dbReference>
<dbReference type="PANTHER" id="PTHR11132">
    <property type="entry name" value="SOLUTE CARRIER FAMILY 35"/>
    <property type="match status" value="1"/>
</dbReference>
<dbReference type="Pfam" id="PF03151">
    <property type="entry name" value="TPT"/>
    <property type="match status" value="1"/>
</dbReference>
<dbReference type="SUPFAM" id="SSF103481">
    <property type="entry name" value="Multidrug resistance efflux transporter EmrE"/>
    <property type="match status" value="1"/>
</dbReference>
<reference key="1">
    <citation type="journal article" date="1994" name="Plant J.">
        <title>Cloning and in vivo expression of functional triose phosphate/phosphate translocators from C3- and C4-plants: evidence for the putative participation of specific amino acid residues in the recognition of phosphoenolpyruvate.</title>
        <authorList>
            <person name="Fischer K."/>
            <person name="Arbinger B."/>
            <person name="Kammerer B."/>
            <person name="Busch C."/>
            <person name="Brink S."/>
            <person name="Wallmeier H."/>
            <person name="Sauer N."/>
            <person name="Eckerskorn C."/>
            <person name="Fluegge U.-I."/>
        </authorList>
    </citation>
    <scope>NUCLEOTIDE SEQUENCE [MRNA]</scope>
    <source>
        <tissue>Leaf</tissue>
    </source>
</reference>
<comment type="function">
    <text>Mediates the export of fixed carbons from the chloroplasts into the cytosol in the form of triose phosphates. In addition, it can also bind and transport phosphoenolpyruvate, thereby increasing the photosynthetic efficiency of C4-plants.</text>
</comment>
<comment type="subunit">
    <text>Homodimer.</text>
</comment>
<comment type="subcellular location">
    <subcellularLocation>
        <location>Plastid</location>
        <location>Chloroplast membrane</location>
        <topology>Multi-pass membrane protein</topology>
    </subcellularLocation>
    <text>Located in zones of contact between the inner and outer membrane of the chloroplast.</text>
</comment>
<comment type="similarity">
    <text evidence="2">Belongs to the TPT transporter family. TPT (TC 2.A.7.9) subfamily.</text>
</comment>
<organism>
    <name type="scientific">Flaveria trinervia</name>
    <name type="common">Clustered yellowtops</name>
    <name type="synonym">Oedera trinervia</name>
    <dbReference type="NCBI Taxonomy" id="4227"/>
    <lineage>
        <taxon>Eukaryota</taxon>
        <taxon>Viridiplantae</taxon>
        <taxon>Streptophyta</taxon>
        <taxon>Embryophyta</taxon>
        <taxon>Tracheophyta</taxon>
        <taxon>Spermatophyta</taxon>
        <taxon>Magnoliopsida</taxon>
        <taxon>eudicotyledons</taxon>
        <taxon>Gunneridae</taxon>
        <taxon>Pentapetalae</taxon>
        <taxon>asterids</taxon>
        <taxon>campanulids</taxon>
        <taxon>Asterales</taxon>
        <taxon>Asteraceae</taxon>
        <taxon>Asteroideae</taxon>
        <taxon>Heliantheae alliance</taxon>
        <taxon>Tageteae</taxon>
        <taxon>Flaveria</taxon>
    </lineage>
</organism>
<accession>P49132</accession>
<name>TPT_FLATR</name>